<keyword id="KW-0418">Kinase</keyword>
<keyword id="KW-0547">Nucleotide-binding</keyword>
<keyword id="KW-0723">Serine/threonine-protein kinase</keyword>
<keyword id="KW-0808">Transferase</keyword>
<name>PDRP_CLOBM</name>
<sequence>MFKIYAVSDSIGETAEQVANATAYQFGSSVKVERVPYVKTFEDVNNLISIIKNPNEAMIISTIVLVDIREFLVQRCVESGIHISNVLGPCISLVSTILNKTPEYKPGAVWDMDKKYYKKIEAMEFAIRYDDSKDHSGIKHADIVLIGLSRTSKTPLSIYLANKGIKALNIPLMPEVPVPEELFEIDRKKIIGLTIDPMHLIEIRRHRVDNMMKIPTELKYANAERVLDELEFADKIMRKLKCKVIDVTKRAIEDTALIIMESVFSDRII</sequence>
<accession>B1KU80</accession>
<feature type="chain" id="PRO_1000136464" description="Putative pyruvate, phosphate dikinase regulatory protein">
    <location>
        <begin position="1"/>
        <end position="269"/>
    </location>
</feature>
<feature type="binding site" evidence="1">
    <location>
        <begin position="147"/>
        <end position="154"/>
    </location>
    <ligand>
        <name>ADP</name>
        <dbReference type="ChEBI" id="CHEBI:456216"/>
    </ligand>
</feature>
<protein>
    <recommendedName>
        <fullName evidence="1">Putative pyruvate, phosphate dikinase regulatory protein</fullName>
        <shortName evidence="1">PPDK regulatory protein</shortName>
        <ecNumber evidence="1">2.7.11.32</ecNumber>
        <ecNumber evidence="1">2.7.4.27</ecNumber>
    </recommendedName>
</protein>
<dbReference type="EC" id="2.7.11.32" evidence="1"/>
<dbReference type="EC" id="2.7.4.27" evidence="1"/>
<dbReference type="EMBL" id="CP000962">
    <property type="protein sequence ID" value="ACA55982.1"/>
    <property type="molecule type" value="Genomic_DNA"/>
</dbReference>
<dbReference type="RefSeq" id="WP_003359375.1">
    <property type="nucleotide sequence ID" value="NC_010520.1"/>
</dbReference>
<dbReference type="SMR" id="B1KU80"/>
<dbReference type="KEGG" id="cbl:CLK_3095"/>
<dbReference type="HOGENOM" id="CLU_046206_2_1_9"/>
<dbReference type="GO" id="GO:0043531">
    <property type="term" value="F:ADP binding"/>
    <property type="evidence" value="ECO:0007669"/>
    <property type="project" value="UniProtKB-UniRule"/>
</dbReference>
<dbReference type="GO" id="GO:0005524">
    <property type="term" value="F:ATP binding"/>
    <property type="evidence" value="ECO:0007669"/>
    <property type="project" value="InterPro"/>
</dbReference>
<dbReference type="GO" id="GO:0016776">
    <property type="term" value="F:phosphotransferase activity, phosphate group as acceptor"/>
    <property type="evidence" value="ECO:0007669"/>
    <property type="project" value="UniProtKB-UniRule"/>
</dbReference>
<dbReference type="GO" id="GO:0004674">
    <property type="term" value="F:protein serine/threonine kinase activity"/>
    <property type="evidence" value="ECO:0007669"/>
    <property type="project" value="UniProtKB-UniRule"/>
</dbReference>
<dbReference type="HAMAP" id="MF_00921">
    <property type="entry name" value="PDRP"/>
    <property type="match status" value="1"/>
</dbReference>
<dbReference type="InterPro" id="IPR005177">
    <property type="entry name" value="Kinase-pyrophosphorylase"/>
</dbReference>
<dbReference type="InterPro" id="IPR026565">
    <property type="entry name" value="PPDK_reg"/>
</dbReference>
<dbReference type="NCBIfam" id="NF003742">
    <property type="entry name" value="PRK05339.1"/>
    <property type="match status" value="1"/>
</dbReference>
<dbReference type="PANTHER" id="PTHR31756">
    <property type="entry name" value="PYRUVATE, PHOSPHATE DIKINASE REGULATORY PROTEIN 1, CHLOROPLASTIC"/>
    <property type="match status" value="1"/>
</dbReference>
<dbReference type="PANTHER" id="PTHR31756:SF3">
    <property type="entry name" value="PYRUVATE, PHOSPHATE DIKINASE REGULATORY PROTEIN 1, CHLOROPLASTIC"/>
    <property type="match status" value="1"/>
</dbReference>
<dbReference type="Pfam" id="PF03618">
    <property type="entry name" value="Kinase-PPPase"/>
    <property type="match status" value="1"/>
</dbReference>
<evidence type="ECO:0000255" key="1">
    <source>
        <dbReference type="HAMAP-Rule" id="MF_00921"/>
    </source>
</evidence>
<proteinExistence type="inferred from homology"/>
<reference key="1">
    <citation type="journal article" date="2007" name="PLoS ONE">
        <title>Analysis of the neurotoxin complex genes in Clostridium botulinum A1-A4 and B1 strains: BoNT/A3, /Ba4 and /B1 clusters are located within plasmids.</title>
        <authorList>
            <person name="Smith T.J."/>
            <person name="Hill K.K."/>
            <person name="Foley B.T."/>
            <person name="Detter J.C."/>
            <person name="Munk A.C."/>
            <person name="Bruce D.C."/>
            <person name="Doggett N.A."/>
            <person name="Smith L.A."/>
            <person name="Marks J.D."/>
            <person name="Xie G."/>
            <person name="Brettin T.S."/>
        </authorList>
    </citation>
    <scope>NUCLEOTIDE SEQUENCE [LARGE SCALE GENOMIC DNA]</scope>
    <source>
        <strain>Loch Maree / Type A3</strain>
    </source>
</reference>
<gene>
    <name type="ordered locus">CLK_3095</name>
</gene>
<organism>
    <name type="scientific">Clostridium botulinum (strain Loch Maree / Type A3)</name>
    <dbReference type="NCBI Taxonomy" id="498214"/>
    <lineage>
        <taxon>Bacteria</taxon>
        <taxon>Bacillati</taxon>
        <taxon>Bacillota</taxon>
        <taxon>Clostridia</taxon>
        <taxon>Eubacteriales</taxon>
        <taxon>Clostridiaceae</taxon>
        <taxon>Clostridium</taxon>
    </lineage>
</organism>
<comment type="function">
    <text evidence="1">Bifunctional serine/threonine kinase and phosphorylase involved in the regulation of the pyruvate, phosphate dikinase (PPDK) by catalyzing its phosphorylation/dephosphorylation.</text>
</comment>
<comment type="catalytic activity">
    <reaction evidence="1">
        <text>N(tele)-phospho-L-histidyl/L-threonyl-[pyruvate, phosphate dikinase] + ADP = N(tele)-phospho-L-histidyl/O-phospho-L-threonyl-[pyruvate, phosphate dikinase] + AMP + H(+)</text>
        <dbReference type="Rhea" id="RHEA:43692"/>
        <dbReference type="Rhea" id="RHEA-COMP:10650"/>
        <dbReference type="Rhea" id="RHEA-COMP:10651"/>
        <dbReference type="ChEBI" id="CHEBI:15378"/>
        <dbReference type="ChEBI" id="CHEBI:30013"/>
        <dbReference type="ChEBI" id="CHEBI:61977"/>
        <dbReference type="ChEBI" id="CHEBI:83586"/>
        <dbReference type="ChEBI" id="CHEBI:456215"/>
        <dbReference type="ChEBI" id="CHEBI:456216"/>
        <dbReference type="EC" id="2.7.11.32"/>
    </reaction>
</comment>
<comment type="catalytic activity">
    <reaction evidence="1">
        <text>N(tele)-phospho-L-histidyl/O-phospho-L-threonyl-[pyruvate, phosphate dikinase] + phosphate + H(+) = N(tele)-phospho-L-histidyl/L-threonyl-[pyruvate, phosphate dikinase] + diphosphate</text>
        <dbReference type="Rhea" id="RHEA:43696"/>
        <dbReference type="Rhea" id="RHEA-COMP:10650"/>
        <dbReference type="Rhea" id="RHEA-COMP:10651"/>
        <dbReference type="ChEBI" id="CHEBI:15378"/>
        <dbReference type="ChEBI" id="CHEBI:30013"/>
        <dbReference type="ChEBI" id="CHEBI:33019"/>
        <dbReference type="ChEBI" id="CHEBI:43474"/>
        <dbReference type="ChEBI" id="CHEBI:61977"/>
        <dbReference type="ChEBI" id="CHEBI:83586"/>
        <dbReference type="EC" id="2.7.4.27"/>
    </reaction>
</comment>
<comment type="similarity">
    <text evidence="1">Belongs to the pyruvate, phosphate/water dikinase regulatory protein family. PDRP subfamily.</text>
</comment>